<sequence>MRVKICGITQAEQGQAIAALGATALGFICVERSPRYINAQKIQPIIQTLPTTVDSIGVFANASLTDIEGVLKVAQLTAIQLHGEETPEFCTQVKQLFPHLEIIKAFRIKTSKSLVNICEYVEVIDTLLLDAYDPHQLGGTGKTLNWDLLRNFHPGRPWFLAGGLTPDNVLHALEGLSPDGIDLSSGVERSPGDKDILKVTQLLENLRKIN</sequence>
<keyword id="KW-0028">Amino-acid biosynthesis</keyword>
<keyword id="KW-0057">Aromatic amino acid biosynthesis</keyword>
<keyword id="KW-0413">Isomerase</keyword>
<keyword id="KW-1185">Reference proteome</keyword>
<keyword id="KW-0822">Tryptophan biosynthesis</keyword>
<proteinExistence type="inferred from homology"/>
<reference key="1">
    <citation type="journal article" date="2008" name="Proc. Natl. Acad. Sci. U.S.A.">
        <title>The genome of Cyanothece 51142, a unicellular diazotrophic cyanobacterium important in the marine nitrogen cycle.</title>
        <authorList>
            <person name="Welsh E.A."/>
            <person name="Liberton M."/>
            <person name="Stoeckel J."/>
            <person name="Loh T."/>
            <person name="Elvitigala T."/>
            <person name="Wang C."/>
            <person name="Wollam A."/>
            <person name="Fulton R.S."/>
            <person name="Clifton S.W."/>
            <person name="Jacobs J.M."/>
            <person name="Aurora R."/>
            <person name="Ghosh B.K."/>
            <person name="Sherman L.A."/>
            <person name="Smith R.D."/>
            <person name="Wilson R.K."/>
            <person name="Pakrasi H.B."/>
        </authorList>
    </citation>
    <scope>NUCLEOTIDE SEQUENCE [LARGE SCALE GENOMIC DNA]</scope>
    <source>
        <strain>ATCC 51142 / BH68</strain>
    </source>
</reference>
<feature type="chain" id="PRO_1000095919" description="N-(5'-phosphoribosyl)anthranilate isomerase">
    <location>
        <begin position="1"/>
        <end position="210"/>
    </location>
</feature>
<name>TRPF_CROS5</name>
<organism>
    <name type="scientific">Crocosphaera subtropica (strain ATCC 51142 / BH68)</name>
    <name type="common">Cyanothece sp. (strain ATCC 51142)</name>
    <dbReference type="NCBI Taxonomy" id="43989"/>
    <lineage>
        <taxon>Bacteria</taxon>
        <taxon>Bacillati</taxon>
        <taxon>Cyanobacteriota</taxon>
        <taxon>Cyanophyceae</taxon>
        <taxon>Oscillatoriophycideae</taxon>
        <taxon>Chroococcales</taxon>
        <taxon>Aphanothecaceae</taxon>
        <taxon>Crocosphaera</taxon>
        <taxon>Crocosphaera subtropica</taxon>
    </lineage>
</organism>
<protein>
    <recommendedName>
        <fullName evidence="1">N-(5'-phosphoribosyl)anthranilate isomerase</fullName>
        <shortName evidence="1">PRAI</shortName>
        <ecNumber evidence="1">5.3.1.24</ecNumber>
    </recommendedName>
</protein>
<evidence type="ECO:0000255" key="1">
    <source>
        <dbReference type="HAMAP-Rule" id="MF_00135"/>
    </source>
</evidence>
<comment type="catalytic activity">
    <reaction evidence="1">
        <text>N-(5-phospho-beta-D-ribosyl)anthranilate = 1-(2-carboxyphenylamino)-1-deoxy-D-ribulose 5-phosphate</text>
        <dbReference type="Rhea" id="RHEA:21540"/>
        <dbReference type="ChEBI" id="CHEBI:18277"/>
        <dbReference type="ChEBI" id="CHEBI:58613"/>
        <dbReference type="EC" id="5.3.1.24"/>
    </reaction>
</comment>
<comment type="pathway">
    <text evidence="1">Amino-acid biosynthesis; L-tryptophan biosynthesis; L-tryptophan from chorismate: step 3/5.</text>
</comment>
<comment type="similarity">
    <text evidence="1">Belongs to the TrpF family.</text>
</comment>
<gene>
    <name evidence="1" type="primary">trpF</name>
    <name type="ordered locus">cce_0998</name>
</gene>
<accession>B1WT19</accession>
<dbReference type="EC" id="5.3.1.24" evidence="1"/>
<dbReference type="EMBL" id="CP000806">
    <property type="protein sequence ID" value="ACB50349.1"/>
    <property type="molecule type" value="Genomic_DNA"/>
</dbReference>
<dbReference type="RefSeq" id="WP_009547103.1">
    <property type="nucleotide sequence ID" value="NC_010546.1"/>
</dbReference>
<dbReference type="SMR" id="B1WT19"/>
<dbReference type="STRING" id="43989.cce_0998"/>
<dbReference type="KEGG" id="cyt:cce_0998"/>
<dbReference type="eggNOG" id="COG0135">
    <property type="taxonomic scope" value="Bacteria"/>
</dbReference>
<dbReference type="HOGENOM" id="CLU_076364_2_0_3"/>
<dbReference type="OrthoDB" id="9786954at2"/>
<dbReference type="UniPathway" id="UPA00035">
    <property type="reaction ID" value="UER00042"/>
</dbReference>
<dbReference type="Proteomes" id="UP000001203">
    <property type="component" value="Chromosome circular"/>
</dbReference>
<dbReference type="GO" id="GO:0004640">
    <property type="term" value="F:phosphoribosylanthranilate isomerase activity"/>
    <property type="evidence" value="ECO:0007669"/>
    <property type="project" value="UniProtKB-UniRule"/>
</dbReference>
<dbReference type="GO" id="GO:0000162">
    <property type="term" value="P:L-tryptophan biosynthetic process"/>
    <property type="evidence" value="ECO:0007669"/>
    <property type="project" value="UniProtKB-UniRule"/>
</dbReference>
<dbReference type="CDD" id="cd00405">
    <property type="entry name" value="PRAI"/>
    <property type="match status" value="1"/>
</dbReference>
<dbReference type="FunFam" id="3.20.20.70:FF:000075">
    <property type="entry name" value="Tryptophan biosynthesis protein TRP1"/>
    <property type="match status" value="1"/>
</dbReference>
<dbReference type="Gene3D" id="3.20.20.70">
    <property type="entry name" value="Aldolase class I"/>
    <property type="match status" value="1"/>
</dbReference>
<dbReference type="HAMAP" id="MF_00135">
    <property type="entry name" value="PRAI"/>
    <property type="match status" value="1"/>
</dbReference>
<dbReference type="InterPro" id="IPR013785">
    <property type="entry name" value="Aldolase_TIM"/>
</dbReference>
<dbReference type="InterPro" id="IPR001240">
    <property type="entry name" value="PRAI_dom"/>
</dbReference>
<dbReference type="InterPro" id="IPR011060">
    <property type="entry name" value="RibuloseP-bd_barrel"/>
</dbReference>
<dbReference type="InterPro" id="IPR044643">
    <property type="entry name" value="TrpF_fam"/>
</dbReference>
<dbReference type="NCBIfam" id="NF002298">
    <property type="entry name" value="PRK01222.1-4"/>
    <property type="match status" value="1"/>
</dbReference>
<dbReference type="PANTHER" id="PTHR42894">
    <property type="entry name" value="N-(5'-PHOSPHORIBOSYL)ANTHRANILATE ISOMERASE"/>
    <property type="match status" value="1"/>
</dbReference>
<dbReference type="PANTHER" id="PTHR42894:SF1">
    <property type="entry name" value="N-(5'-PHOSPHORIBOSYL)ANTHRANILATE ISOMERASE"/>
    <property type="match status" value="1"/>
</dbReference>
<dbReference type="Pfam" id="PF00697">
    <property type="entry name" value="PRAI"/>
    <property type="match status" value="1"/>
</dbReference>
<dbReference type="SUPFAM" id="SSF51366">
    <property type="entry name" value="Ribulose-phoshate binding barrel"/>
    <property type="match status" value="1"/>
</dbReference>